<evidence type="ECO:0000250" key="1"/>
<evidence type="ECO:0000255" key="2"/>
<evidence type="ECO:0000305" key="3"/>
<comment type="function">
    <text>Receptor for GRF, coupled to G proteins which activate adenylyl cyclase. Stimulates somatotroph cell growth, growth hormone gene transcription and growth hormone secretion.</text>
</comment>
<comment type="subcellular location">
    <subcellularLocation>
        <location>Cell membrane</location>
        <topology>Multi-pass membrane protein</topology>
    </subcellularLocation>
</comment>
<comment type="alternative products">
    <event type="alternative splicing"/>
    <isoform>
        <id>Q02644-1</id>
        <name>Long</name>
        <sequence type="displayed"/>
    </isoform>
    <isoform>
        <id>Q02644-2</id>
        <name>Short</name>
        <sequence type="described" ref="VSP_002003"/>
    </isoform>
</comment>
<comment type="tissue specificity">
    <text>Pituitary gland.</text>
</comment>
<comment type="similarity">
    <text evidence="3">Belongs to the G-protein coupled receptor 2 family.</text>
</comment>
<name>GHRHR_RAT</name>
<organism>
    <name type="scientific">Rattus norvegicus</name>
    <name type="common">Rat</name>
    <dbReference type="NCBI Taxonomy" id="10116"/>
    <lineage>
        <taxon>Eukaryota</taxon>
        <taxon>Metazoa</taxon>
        <taxon>Chordata</taxon>
        <taxon>Craniata</taxon>
        <taxon>Vertebrata</taxon>
        <taxon>Euteleostomi</taxon>
        <taxon>Mammalia</taxon>
        <taxon>Eutheria</taxon>
        <taxon>Euarchontoglires</taxon>
        <taxon>Glires</taxon>
        <taxon>Rodentia</taxon>
        <taxon>Myomorpha</taxon>
        <taxon>Muroidea</taxon>
        <taxon>Muridae</taxon>
        <taxon>Murinae</taxon>
        <taxon>Rattus</taxon>
    </lineage>
</organism>
<proteinExistence type="evidence at transcript level"/>
<feature type="signal peptide" evidence="2">
    <location>
        <begin position="1"/>
        <end position="22"/>
    </location>
</feature>
<feature type="chain" id="PRO_0000012831" description="Growth hormone-releasing hormone receptor">
    <location>
        <begin position="23"/>
        <end position="464"/>
    </location>
</feature>
<feature type="topological domain" description="Extracellular" evidence="2">
    <location>
        <begin position="23"/>
        <end position="130"/>
    </location>
</feature>
<feature type="transmembrane region" description="Helical; Name=1" evidence="2">
    <location>
        <begin position="131"/>
        <end position="151"/>
    </location>
</feature>
<feature type="topological domain" description="Cytoplasmic" evidence="2">
    <location>
        <begin position="152"/>
        <end position="167"/>
    </location>
</feature>
<feature type="transmembrane region" description="Helical; Name=2" evidence="2">
    <location>
        <begin position="168"/>
        <end position="188"/>
    </location>
</feature>
<feature type="topological domain" description="Extracellular" evidence="2">
    <location>
        <begin position="189"/>
        <end position="210"/>
    </location>
</feature>
<feature type="transmembrane region" description="Helical; Name=3" evidence="2">
    <location>
        <begin position="211"/>
        <end position="231"/>
    </location>
</feature>
<feature type="topological domain" description="Cytoplasmic" evidence="2">
    <location>
        <begin position="232"/>
        <end position="240"/>
    </location>
</feature>
<feature type="transmembrane region" description="Helical; Name=4" evidence="2">
    <location>
        <begin position="241"/>
        <end position="261"/>
    </location>
</feature>
<feature type="topological domain" description="Extracellular" evidence="2">
    <location>
        <begin position="262"/>
        <end position="283"/>
    </location>
</feature>
<feature type="transmembrane region" description="Helical; Name=5" evidence="2">
    <location>
        <begin position="284"/>
        <end position="304"/>
    </location>
</feature>
<feature type="topological domain" description="Cytoplasmic" evidence="2">
    <location>
        <begin position="305"/>
        <end position="372"/>
    </location>
</feature>
<feature type="transmembrane region" description="Helical; Name=6" evidence="2">
    <location>
        <begin position="373"/>
        <end position="393"/>
    </location>
</feature>
<feature type="topological domain" description="Extracellular" evidence="2">
    <location>
        <begin position="394"/>
        <end position="398"/>
    </location>
</feature>
<feature type="transmembrane region" description="Helical; Name=7" evidence="2">
    <location>
        <begin position="399"/>
        <end position="419"/>
    </location>
</feature>
<feature type="topological domain" description="Cytoplasmic" evidence="2">
    <location>
        <begin position="420"/>
        <end position="464"/>
    </location>
</feature>
<feature type="glycosylation site" description="N-linked (GlcNAc...) asparagine" evidence="2">
    <location>
        <position position="50"/>
    </location>
</feature>
<feature type="disulfide bond" evidence="1">
    <location>
        <begin position="41"/>
        <end position="64"/>
    </location>
</feature>
<feature type="disulfide bond" evidence="1">
    <location>
        <begin position="55"/>
        <end position="96"/>
    </location>
</feature>
<feature type="disulfide bond" evidence="1">
    <location>
        <begin position="78"/>
        <end position="112"/>
    </location>
</feature>
<feature type="splice variant" id="VSP_002003" description="In isoform Short." evidence="3">
    <location>
        <begin position="325"/>
        <end position="365"/>
    </location>
</feature>
<feature type="sequence conflict" description="In Ref. 2; L07380." evidence="3" ref="2">
    <original>S</original>
    <variation>W</variation>
    <location>
        <position position="233"/>
    </location>
</feature>
<feature type="sequence conflict" description="In Ref. 2; L07380." evidence="3" ref="2">
    <original>C</original>
    <variation>S</variation>
    <location>
        <position position="305"/>
    </location>
</feature>
<dbReference type="EMBL" id="L01407">
    <property type="protein sequence ID" value="AAA41221.1"/>
    <property type="molecule type" value="mRNA"/>
</dbReference>
<dbReference type="EMBL" id="L07380">
    <property type="status" value="NOT_ANNOTATED_CDS"/>
    <property type="molecule type" value="mRNA"/>
</dbReference>
<dbReference type="PIR" id="S29754">
    <property type="entry name" value="S29754"/>
</dbReference>
<dbReference type="RefSeq" id="NP_036982.1">
    <molecule id="Q02644-2"/>
    <property type="nucleotide sequence ID" value="NM_012850.3"/>
</dbReference>
<dbReference type="SMR" id="Q02644"/>
<dbReference type="FunCoup" id="Q02644">
    <property type="interactions" value="1"/>
</dbReference>
<dbReference type="STRING" id="10116.ENSRNOP00000016087"/>
<dbReference type="BindingDB" id="Q02644"/>
<dbReference type="ChEMBL" id="CHEMBL3709"/>
<dbReference type="GuidetoPHARMACOLOGY" id="247"/>
<dbReference type="GlyCosmos" id="Q02644">
    <property type="glycosylation" value="1 site, No reported glycans"/>
</dbReference>
<dbReference type="GlyGen" id="Q02644">
    <property type="glycosylation" value="1 site"/>
</dbReference>
<dbReference type="PhosphoSitePlus" id="Q02644"/>
<dbReference type="PaxDb" id="10116-ENSRNOP00000016087"/>
<dbReference type="GeneID" id="25321"/>
<dbReference type="KEGG" id="rno:25321"/>
<dbReference type="UCSC" id="RGD:2688">
    <molecule id="Q02644-1"/>
    <property type="organism name" value="rat"/>
</dbReference>
<dbReference type="AGR" id="RGD:2688"/>
<dbReference type="CTD" id="2692"/>
<dbReference type="RGD" id="2688">
    <property type="gene designation" value="Ghrhr"/>
</dbReference>
<dbReference type="VEuPathDB" id="HostDB:ENSRNOG00000011808"/>
<dbReference type="eggNOG" id="KOG4564">
    <property type="taxonomic scope" value="Eukaryota"/>
</dbReference>
<dbReference type="HOGENOM" id="CLU_002753_4_4_1"/>
<dbReference type="InParanoid" id="Q02644"/>
<dbReference type="PhylomeDB" id="Q02644"/>
<dbReference type="TreeFam" id="TF315710"/>
<dbReference type="Reactome" id="R-RNO-420092">
    <property type="pathway name" value="Glucagon-type ligand receptors"/>
</dbReference>
<dbReference type="PRO" id="PR:Q02644"/>
<dbReference type="Proteomes" id="UP000002494">
    <property type="component" value="Chromosome 4"/>
</dbReference>
<dbReference type="Bgee" id="ENSRNOG00000011808">
    <property type="expression patterns" value="Expressed in kidney and 10 other cell types or tissues"/>
</dbReference>
<dbReference type="ExpressionAtlas" id="Q02644">
    <property type="expression patterns" value="baseline and differential"/>
</dbReference>
<dbReference type="GO" id="GO:0009986">
    <property type="term" value="C:cell surface"/>
    <property type="evidence" value="ECO:0000314"/>
    <property type="project" value="RGD"/>
</dbReference>
<dbReference type="GO" id="GO:0005737">
    <property type="term" value="C:cytoplasm"/>
    <property type="evidence" value="ECO:0000266"/>
    <property type="project" value="RGD"/>
</dbReference>
<dbReference type="GO" id="GO:0016020">
    <property type="term" value="C:membrane"/>
    <property type="evidence" value="ECO:0000266"/>
    <property type="project" value="RGD"/>
</dbReference>
<dbReference type="GO" id="GO:0005637">
    <property type="term" value="C:nuclear inner membrane"/>
    <property type="evidence" value="ECO:0000266"/>
    <property type="project" value="RGD"/>
</dbReference>
<dbReference type="GO" id="GO:0016363">
    <property type="term" value="C:nuclear matrix"/>
    <property type="evidence" value="ECO:0000266"/>
    <property type="project" value="RGD"/>
</dbReference>
<dbReference type="GO" id="GO:0005640">
    <property type="term" value="C:nuclear outer membrane"/>
    <property type="evidence" value="ECO:0000266"/>
    <property type="project" value="RGD"/>
</dbReference>
<dbReference type="GO" id="GO:0005886">
    <property type="term" value="C:plasma membrane"/>
    <property type="evidence" value="ECO:0000266"/>
    <property type="project" value="RGD"/>
</dbReference>
<dbReference type="GO" id="GO:0042383">
    <property type="term" value="C:sarcolemma"/>
    <property type="evidence" value="ECO:0000314"/>
    <property type="project" value="RGD"/>
</dbReference>
<dbReference type="GO" id="GO:0030141">
    <property type="term" value="C:secretory granule"/>
    <property type="evidence" value="ECO:0000266"/>
    <property type="project" value="RGD"/>
</dbReference>
<dbReference type="GO" id="GO:0008528">
    <property type="term" value="F:G protein-coupled peptide receptor activity"/>
    <property type="evidence" value="ECO:0000318"/>
    <property type="project" value="GO_Central"/>
</dbReference>
<dbReference type="GO" id="GO:0019838">
    <property type="term" value="F:growth factor binding"/>
    <property type="evidence" value="ECO:0000266"/>
    <property type="project" value="RGD"/>
</dbReference>
<dbReference type="GO" id="GO:0016520">
    <property type="term" value="F:growth hormone-releasing hormone receptor activity"/>
    <property type="evidence" value="ECO:0000314"/>
    <property type="project" value="RGD"/>
</dbReference>
<dbReference type="GO" id="GO:0017046">
    <property type="term" value="F:peptide hormone binding"/>
    <property type="evidence" value="ECO:0000266"/>
    <property type="project" value="RGD"/>
</dbReference>
<dbReference type="GO" id="GO:0021984">
    <property type="term" value="P:adenohypophysis development"/>
    <property type="evidence" value="ECO:0000266"/>
    <property type="project" value="RGD"/>
</dbReference>
<dbReference type="GO" id="GO:0007189">
    <property type="term" value="P:adenylate cyclase-activating G protein-coupled receptor signaling pathway"/>
    <property type="evidence" value="ECO:0000266"/>
    <property type="project" value="RGD"/>
</dbReference>
<dbReference type="GO" id="GO:0141156">
    <property type="term" value="P:cAMP/PKA signal transduction"/>
    <property type="evidence" value="ECO:0000314"/>
    <property type="project" value="RGD"/>
</dbReference>
<dbReference type="GO" id="GO:0048469">
    <property type="term" value="P:cell maturation"/>
    <property type="evidence" value="ECO:0000266"/>
    <property type="project" value="RGD"/>
</dbReference>
<dbReference type="GO" id="GO:0007166">
    <property type="term" value="P:cell surface receptor signaling pathway"/>
    <property type="evidence" value="ECO:0007669"/>
    <property type="project" value="InterPro"/>
</dbReference>
<dbReference type="GO" id="GO:0071333">
    <property type="term" value="P:cellular response to glucose stimulus"/>
    <property type="evidence" value="ECO:0000270"/>
    <property type="project" value="RGD"/>
</dbReference>
<dbReference type="GO" id="GO:0032869">
    <property type="term" value="P:cellular response to insulin stimulus"/>
    <property type="evidence" value="ECO:0000266"/>
    <property type="project" value="RGD"/>
</dbReference>
<dbReference type="GO" id="GO:0008340">
    <property type="term" value="P:determination of adult lifespan"/>
    <property type="evidence" value="ECO:0000266"/>
    <property type="project" value="RGD"/>
</dbReference>
<dbReference type="GO" id="GO:0051649">
    <property type="term" value="P:establishment of localization in cell"/>
    <property type="evidence" value="ECO:0000266"/>
    <property type="project" value="RGD"/>
</dbReference>
<dbReference type="GO" id="GO:0030252">
    <property type="term" value="P:growth hormone secretion"/>
    <property type="evidence" value="ECO:0000266"/>
    <property type="project" value="RGD"/>
</dbReference>
<dbReference type="GO" id="GO:0042445">
    <property type="term" value="P:hormone metabolic process"/>
    <property type="evidence" value="ECO:0000266"/>
    <property type="project" value="RGD"/>
</dbReference>
<dbReference type="GO" id="GO:0046879">
    <property type="term" value="P:hormone secretion"/>
    <property type="evidence" value="ECO:0000266"/>
    <property type="project" value="RGD"/>
</dbReference>
<dbReference type="GO" id="GO:0007595">
    <property type="term" value="P:lactation"/>
    <property type="evidence" value="ECO:0000266"/>
    <property type="project" value="RGD"/>
</dbReference>
<dbReference type="GO" id="GO:0030879">
    <property type="term" value="P:mammary gland development"/>
    <property type="evidence" value="ECO:0000266"/>
    <property type="project" value="RGD"/>
</dbReference>
<dbReference type="GO" id="GO:0008284">
    <property type="term" value="P:positive regulation of cell population proliferation"/>
    <property type="evidence" value="ECO:0000266"/>
    <property type="project" value="RGD"/>
</dbReference>
<dbReference type="GO" id="GO:0046010">
    <property type="term" value="P:positive regulation of circadian sleep/wake cycle, non-REM sleep"/>
    <property type="evidence" value="ECO:0000315"/>
    <property type="project" value="RGD"/>
</dbReference>
<dbReference type="GO" id="GO:0060124">
    <property type="term" value="P:positive regulation of growth hormone secretion"/>
    <property type="evidence" value="ECO:0000315"/>
    <property type="project" value="RGD"/>
</dbReference>
<dbReference type="GO" id="GO:0046887">
    <property type="term" value="P:positive regulation of hormone secretion"/>
    <property type="evidence" value="ECO:0000266"/>
    <property type="project" value="RGD"/>
</dbReference>
<dbReference type="GO" id="GO:0040018">
    <property type="term" value="P:positive regulation of multicellular organism growth"/>
    <property type="evidence" value="ECO:0000266"/>
    <property type="project" value="RGD"/>
</dbReference>
<dbReference type="GO" id="GO:0040008">
    <property type="term" value="P:regulation of growth"/>
    <property type="evidence" value="ECO:0000304"/>
    <property type="project" value="RGD"/>
</dbReference>
<dbReference type="GO" id="GO:0043567">
    <property type="term" value="P:regulation of insulin-like growth factor receptor signaling pathway"/>
    <property type="evidence" value="ECO:0000266"/>
    <property type="project" value="RGD"/>
</dbReference>
<dbReference type="GO" id="GO:0033143">
    <property type="term" value="P:regulation of intracellular steroid hormone receptor signaling pathway"/>
    <property type="evidence" value="ECO:0000266"/>
    <property type="project" value="RGD"/>
</dbReference>
<dbReference type="GO" id="GO:0051246">
    <property type="term" value="P:regulation of protein metabolic process"/>
    <property type="evidence" value="ECO:0000266"/>
    <property type="project" value="RGD"/>
</dbReference>
<dbReference type="GO" id="GO:0043627">
    <property type="term" value="P:response to estrogen"/>
    <property type="evidence" value="ECO:0000266"/>
    <property type="project" value="RGD"/>
</dbReference>
<dbReference type="GO" id="GO:0051384">
    <property type="term" value="P:response to glucocorticoid"/>
    <property type="evidence" value="ECO:0000266"/>
    <property type="project" value="RGD"/>
</dbReference>
<dbReference type="GO" id="GO:0032868">
    <property type="term" value="P:response to insulin"/>
    <property type="evidence" value="ECO:0000266"/>
    <property type="project" value="RGD"/>
</dbReference>
<dbReference type="GO" id="GO:0060133">
    <property type="term" value="P:somatotropin secreting cell development"/>
    <property type="evidence" value="ECO:0000266"/>
    <property type="project" value="RGD"/>
</dbReference>
<dbReference type="FunFam" id="4.10.1240.10:FF:000014">
    <property type="entry name" value="Growth hormone-releasing hormone receptor 2"/>
    <property type="match status" value="1"/>
</dbReference>
<dbReference type="Gene3D" id="4.10.1240.10">
    <property type="entry name" value="GPCR, family 2, extracellular hormone receptor domain"/>
    <property type="match status" value="1"/>
</dbReference>
<dbReference type="Gene3D" id="1.20.1070.10">
    <property type="entry name" value="Rhodopsin 7-helix transmembrane proteins"/>
    <property type="match status" value="1"/>
</dbReference>
<dbReference type="InterPro" id="IPR050332">
    <property type="entry name" value="GPCR_2"/>
</dbReference>
<dbReference type="InterPro" id="IPR017981">
    <property type="entry name" value="GPCR_2-like_7TM"/>
</dbReference>
<dbReference type="InterPro" id="IPR036445">
    <property type="entry name" value="GPCR_2_extracell_dom_sf"/>
</dbReference>
<dbReference type="InterPro" id="IPR001879">
    <property type="entry name" value="GPCR_2_extracellular_dom"/>
</dbReference>
<dbReference type="InterPro" id="IPR003288">
    <property type="entry name" value="GPCR_2_GHRH_rcpt"/>
</dbReference>
<dbReference type="InterPro" id="IPR000832">
    <property type="entry name" value="GPCR_2_secretin-like"/>
</dbReference>
<dbReference type="InterPro" id="IPR017983">
    <property type="entry name" value="GPCR_2_secretin-like_CS"/>
</dbReference>
<dbReference type="PANTHER" id="PTHR45620:SF14">
    <property type="entry name" value="GROWTH HORMONE-RELEASING HORMONE RECEPTOR"/>
    <property type="match status" value="1"/>
</dbReference>
<dbReference type="PANTHER" id="PTHR45620">
    <property type="entry name" value="PDF RECEPTOR-LIKE PROTEIN-RELATED"/>
    <property type="match status" value="1"/>
</dbReference>
<dbReference type="Pfam" id="PF00002">
    <property type="entry name" value="7tm_2"/>
    <property type="match status" value="1"/>
</dbReference>
<dbReference type="Pfam" id="PF02793">
    <property type="entry name" value="HRM"/>
    <property type="match status" value="1"/>
</dbReference>
<dbReference type="PRINTS" id="PR01352">
    <property type="entry name" value="GHRHRECEPTOR"/>
</dbReference>
<dbReference type="PRINTS" id="PR00249">
    <property type="entry name" value="GPCRSECRETIN"/>
</dbReference>
<dbReference type="SMART" id="SM00008">
    <property type="entry name" value="HormR"/>
    <property type="match status" value="1"/>
</dbReference>
<dbReference type="SUPFAM" id="SSF81321">
    <property type="entry name" value="Family A G protein-coupled receptor-like"/>
    <property type="match status" value="1"/>
</dbReference>
<dbReference type="SUPFAM" id="SSF111418">
    <property type="entry name" value="Hormone receptor domain"/>
    <property type="match status" value="1"/>
</dbReference>
<dbReference type="PROSITE" id="PS00649">
    <property type="entry name" value="G_PROTEIN_RECEP_F2_1"/>
    <property type="match status" value="1"/>
</dbReference>
<dbReference type="PROSITE" id="PS00650">
    <property type="entry name" value="G_PROTEIN_RECEP_F2_2"/>
    <property type="match status" value="1"/>
</dbReference>
<dbReference type="PROSITE" id="PS50227">
    <property type="entry name" value="G_PROTEIN_RECEP_F2_3"/>
    <property type="match status" value="1"/>
</dbReference>
<dbReference type="PROSITE" id="PS50261">
    <property type="entry name" value="G_PROTEIN_RECEP_F2_4"/>
    <property type="match status" value="1"/>
</dbReference>
<reference key="1">
    <citation type="journal article" date="1992" name="Mol. Endocrinol.">
        <title>Molecular cloning and expression of a pituitary-specific receptor for growth hormone-releasing hormone.</title>
        <authorList>
            <person name="Mayo K.E."/>
        </authorList>
    </citation>
    <scope>NUCLEOTIDE SEQUENCE [MRNA]</scope>
    <source>
        <tissue>Pituitary</tissue>
    </source>
</reference>
<reference key="2">
    <citation type="journal article" date="1992" name="Nature">
        <title>Pit-1-dependent expression of the receptor for growth hormone releasing factor mediates pituitary cell growth.</title>
        <authorList>
            <person name="Lin C.R."/>
            <person name="Lin S.-C."/>
            <person name="Chang C.P."/>
            <person name="Rosenfeld M.G."/>
        </authorList>
    </citation>
    <scope>NUCLEOTIDE SEQUENCE [MRNA]</scope>
</reference>
<sequence>MDSLLWATWVLCLLNLWGVALGHLHLECDFITQLRDDELACLQAAEGTNNSSMGCPGTWDGLLCWPPTGSGQWVSLPCPEFFSHFGSDPGAVKRDCTITGWSDPFPPYPVACPVPLELLTEEKSYFSTVKIIYTTGHSISIVALCVAIAILVALRRLHCPRNYIHTQLFATFILKASAVFLKDAAVFQGDSTDHCSMSTILCKVSVAVSHFATMTNFSWLLAEAVYLSCLLASTSPRSKPAFWWLVLAGWGLPVLCTGTWVGCKLAFEDTACWDLDDSSPYWWIIKGPIVLSVGVNFGLFLNIICILLRKLGPAQGGLHTRAQYCNYLLPWSCPLPQVPRERTDLGPSSHEITVQESGTRNCQLPWRLSKSTLLLIPLFGIHYIIFNFLPDSAGLGIRLPLELGLGSFQGFVVAVLYCFLNQEVRTEISRKWYGHDPELLPARRTCTEWTTPPRSRVKVLTSEC</sequence>
<keyword id="KW-0025">Alternative splicing</keyword>
<keyword id="KW-1003">Cell membrane</keyword>
<keyword id="KW-1015">Disulfide bond</keyword>
<keyword id="KW-0297">G-protein coupled receptor</keyword>
<keyword id="KW-0325">Glycoprotein</keyword>
<keyword id="KW-0472">Membrane</keyword>
<keyword id="KW-0675">Receptor</keyword>
<keyword id="KW-1185">Reference proteome</keyword>
<keyword id="KW-0732">Signal</keyword>
<keyword id="KW-0807">Transducer</keyword>
<keyword id="KW-0812">Transmembrane</keyword>
<keyword id="KW-1133">Transmembrane helix</keyword>
<accession>Q02644</accession>
<protein>
    <recommendedName>
        <fullName>Growth hormone-releasing hormone receptor</fullName>
        <shortName>GHRH receptor</shortName>
    </recommendedName>
    <alternativeName>
        <fullName>Growth hormone-releasing factor receptor</fullName>
        <shortName>GRF receptor</shortName>
        <shortName>GRFR</shortName>
    </alternativeName>
</protein>
<gene>
    <name type="primary">Ghrhr</name>
    <name type="synonym">Grfr</name>
</gene>